<evidence type="ECO:0000255" key="1">
    <source>
        <dbReference type="HAMAP-Rule" id="MF_01322"/>
    </source>
</evidence>
<organism>
    <name type="scientific">Burkholderia multivorans (strain ATCC 17616 / 249)</name>
    <dbReference type="NCBI Taxonomy" id="395019"/>
    <lineage>
        <taxon>Bacteria</taxon>
        <taxon>Pseudomonadati</taxon>
        <taxon>Pseudomonadota</taxon>
        <taxon>Betaproteobacteria</taxon>
        <taxon>Burkholderiales</taxon>
        <taxon>Burkholderiaceae</taxon>
        <taxon>Burkholderia</taxon>
        <taxon>Burkholderia cepacia complex</taxon>
    </lineage>
</organism>
<name>RPOC_BURM1</name>
<protein>
    <recommendedName>
        <fullName evidence="1">DNA-directed RNA polymerase subunit beta'</fullName>
        <shortName evidence="1">RNAP subunit beta'</shortName>
        <ecNumber evidence="1">2.7.7.6</ecNumber>
    </recommendedName>
    <alternativeName>
        <fullName evidence="1">RNA polymerase subunit beta'</fullName>
    </alternativeName>
    <alternativeName>
        <fullName evidence="1">Transcriptase subunit beta'</fullName>
    </alternativeName>
</protein>
<feature type="chain" id="PRO_0000353312" description="DNA-directed RNA polymerase subunit beta'">
    <location>
        <begin position="1"/>
        <end position="1413"/>
    </location>
</feature>
<feature type="binding site" evidence="1">
    <location>
        <position position="70"/>
    </location>
    <ligand>
        <name>Zn(2+)</name>
        <dbReference type="ChEBI" id="CHEBI:29105"/>
        <label>1</label>
    </ligand>
</feature>
<feature type="binding site" evidence="1">
    <location>
        <position position="72"/>
    </location>
    <ligand>
        <name>Zn(2+)</name>
        <dbReference type="ChEBI" id="CHEBI:29105"/>
        <label>1</label>
    </ligand>
</feature>
<feature type="binding site" evidence="1">
    <location>
        <position position="85"/>
    </location>
    <ligand>
        <name>Zn(2+)</name>
        <dbReference type="ChEBI" id="CHEBI:29105"/>
        <label>1</label>
    </ligand>
</feature>
<feature type="binding site" evidence="1">
    <location>
        <position position="88"/>
    </location>
    <ligand>
        <name>Zn(2+)</name>
        <dbReference type="ChEBI" id="CHEBI:29105"/>
        <label>1</label>
    </ligand>
</feature>
<feature type="binding site" evidence="1">
    <location>
        <position position="460"/>
    </location>
    <ligand>
        <name>Mg(2+)</name>
        <dbReference type="ChEBI" id="CHEBI:18420"/>
    </ligand>
</feature>
<feature type="binding site" evidence="1">
    <location>
        <position position="462"/>
    </location>
    <ligand>
        <name>Mg(2+)</name>
        <dbReference type="ChEBI" id="CHEBI:18420"/>
    </ligand>
</feature>
<feature type="binding site" evidence="1">
    <location>
        <position position="464"/>
    </location>
    <ligand>
        <name>Mg(2+)</name>
        <dbReference type="ChEBI" id="CHEBI:18420"/>
    </ligand>
</feature>
<feature type="binding site" evidence="1">
    <location>
        <position position="819"/>
    </location>
    <ligand>
        <name>Zn(2+)</name>
        <dbReference type="ChEBI" id="CHEBI:29105"/>
        <label>2</label>
    </ligand>
</feature>
<feature type="binding site" evidence="1">
    <location>
        <position position="893"/>
    </location>
    <ligand>
        <name>Zn(2+)</name>
        <dbReference type="ChEBI" id="CHEBI:29105"/>
        <label>2</label>
    </ligand>
</feature>
<feature type="binding site" evidence="1">
    <location>
        <position position="900"/>
    </location>
    <ligand>
        <name>Zn(2+)</name>
        <dbReference type="ChEBI" id="CHEBI:29105"/>
        <label>2</label>
    </ligand>
</feature>
<feature type="binding site" evidence="1">
    <location>
        <position position="903"/>
    </location>
    <ligand>
        <name>Zn(2+)</name>
        <dbReference type="ChEBI" id="CHEBI:29105"/>
        <label>2</label>
    </ligand>
</feature>
<sequence>MKALLDLFKQVQQEEVFDAIKIGLASPDKIRSWSFGEVKKPETINYRTFKPERDGLFCAKIFGPIKDYECLCGKYKRLKHRGVICEKCGVEVTLAKVRRERMGHIELASPVAHIWFLKSLPSRLGMVLDMTLRDIERVLYFEAYVVIDPGMTPLKARQIMTEEDYYNKVEEYGDEFRAEMGAEGVRELLRAINIDEQVEQLRTELKNTGSEAKIKKYAKRLKVLEAFQRSGIKPEWMILEVLPVLPPELRPLVPLDGGRFATSDLNDLYRRVINRNNRLKRLLELKAPEIIVRNEKRMLQEAVDSLLDNGRRGKAMTGANKRPLKSLADMIKGKGGRFRQNLLGKRVDYSGRSVIVVGPTLKLHQCGLPKLMALELFKPFIFNKLEVMGVATTIKAAKKEVENQTPVVWDILEEVIREHPVMLNRAPTLHRLGIQAFEPVLIEGKAIQLHPLVCAAFNADFDGDQMAVHVPLSLEAQMEARTLMLASNNVLFPANGDPSIVPSQDIVLGLYYATREAINGKGEGLTFTGVSEVIRAYENKEVELASRVNVRITEMVRNEDKSEGAPEFVPKISLYATTVGRAILSEILPPGLPFSVLNKPLKKKEISRLINTAFRKCGLRATVVFADQLMQSGFRLATRAGISICVDDMLVPPQKETIVGDAAKKVKEYDRQYMSGLVTAQERYNNVVDIWSATSEAVGKAMMEQLSTEPVIDRDGNETRQESFNSIYMMADSGARGSAVQIRQLAGMRGLMAKPDGSIIETPITANFREGLNVLQYFISTHGARKGLADTALKTANSGYLTRRLVDVTQDLVVVEDDCGTSNGVAMKALVEGGEVVEALRDRILGRVAVADVVNPETQETLYEAGTLLDETAVEEIERLGIDEVRVRTPLTCETRYGLCASCYGRDLGRGTLVNVGEAVGVIAAQSIGEPGTQLTMRTFHIGGAASRAAVASSVEAKSNGTVRFSPSMRYVTNAKGEQIVISRSGEALITDDIGRERERHKIPYGATLLQLDGAAIKAGTQLATWDPMTRPIITEYGGTVKFENVEEGVTVAKQIDDVTGLSTLVVIDAKRRGSQASKSVRPQVKLLDANGDEVKIPGTEHSVQIGFQVGALITVKDGQQVQVGEVLARIPTESQKTRDITGGLPRVAELFEARSPKDAGILAEVTGTVSFGKDTKGKQRLVITDLEGNQHEFLIAKEKQVLVHDGQVVNKGEMIVDGPADPHDILRLQGIEALSRYIVDEVQDVYRLQGVKINDKHIEVIVRQMLRRVQITDNGDSRFIPGEQVERSDMLDENDRMIAEGKRPASYENVLLGITKASLSTDSFISAASFQETTRVLTEAAIMGKRDDLRGLKENVIVGRLIPAGTGLAFHKARKAKEMSDRERFDQIAAEEAFDFGTPSTPAEEPQHPAAE</sequence>
<dbReference type="EC" id="2.7.7.6" evidence="1"/>
<dbReference type="EMBL" id="CP000868">
    <property type="protein sequence ID" value="ABX13937.1"/>
    <property type="molecule type" value="Genomic_DNA"/>
</dbReference>
<dbReference type="EMBL" id="AP009385">
    <property type="protein sequence ID" value="BAG44897.1"/>
    <property type="molecule type" value="Genomic_DNA"/>
</dbReference>
<dbReference type="RefSeq" id="WP_006400664.1">
    <property type="nucleotide sequence ID" value="NC_010804.1"/>
</dbReference>
<dbReference type="SMR" id="A9ADI6"/>
<dbReference type="STRING" id="395019.BMULJ_03012"/>
<dbReference type="GeneID" id="89568634"/>
<dbReference type="KEGG" id="bmj:BMULJ_03012"/>
<dbReference type="KEGG" id="bmu:Bmul_0242"/>
<dbReference type="eggNOG" id="COG0086">
    <property type="taxonomic scope" value="Bacteria"/>
</dbReference>
<dbReference type="HOGENOM" id="CLU_000524_3_1_4"/>
<dbReference type="Proteomes" id="UP000008815">
    <property type="component" value="Chromosome 1"/>
</dbReference>
<dbReference type="GO" id="GO:0000428">
    <property type="term" value="C:DNA-directed RNA polymerase complex"/>
    <property type="evidence" value="ECO:0007669"/>
    <property type="project" value="UniProtKB-KW"/>
</dbReference>
<dbReference type="GO" id="GO:0003677">
    <property type="term" value="F:DNA binding"/>
    <property type="evidence" value="ECO:0007669"/>
    <property type="project" value="UniProtKB-UniRule"/>
</dbReference>
<dbReference type="GO" id="GO:0003899">
    <property type="term" value="F:DNA-directed RNA polymerase activity"/>
    <property type="evidence" value="ECO:0007669"/>
    <property type="project" value="UniProtKB-UniRule"/>
</dbReference>
<dbReference type="GO" id="GO:0000287">
    <property type="term" value="F:magnesium ion binding"/>
    <property type="evidence" value="ECO:0007669"/>
    <property type="project" value="UniProtKB-UniRule"/>
</dbReference>
<dbReference type="GO" id="GO:0008270">
    <property type="term" value="F:zinc ion binding"/>
    <property type="evidence" value="ECO:0007669"/>
    <property type="project" value="UniProtKB-UniRule"/>
</dbReference>
<dbReference type="GO" id="GO:0006351">
    <property type="term" value="P:DNA-templated transcription"/>
    <property type="evidence" value="ECO:0007669"/>
    <property type="project" value="UniProtKB-UniRule"/>
</dbReference>
<dbReference type="CDD" id="cd02655">
    <property type="entry name" value="RNAP_beta'_C"/>
    <property type="match status" value="1"/>
</dbReference>
<dbReference type="CDD" id="cd01609">
    <property type="entry name" value="RNAP_beta'_N"/>
    <property type="match status" value="1"/>
</dbReference>
<dbReference type="FunFam" id="1.10.132.30:FF:000003">
    <property type="entry name" value="DNA-directed RNA polymerase subunit beta"/>
    <property type="match status" value="1"/>
</dbReference>
<dbReference type="FunFam" id="1.10.150.390:FF:000002">
    <property type="entry name" value="DNA-directed RNA polymerase subunit beta"/>
    <property type="match status" value="1"/>
</dbReference>
<dbReference type="FunFam" id="4.10.860.120:FF:000001">
    <property type="entry name" value="DNA-directed RNA polymerase subunit beta"/>
    <property type="match status" value="1"/>
</dbReference>
<dbReference type="Gene3D" id="1.10.132.30">
    <property type="match status" value="1"/>
</dbReference>
<dbReference type="Gene3D" id="1.10.150.390">
    <property type="match status" value="1"/>
</dbReference>
<dbReference type="Gene3D" id="1.10.1790.20">
    <property type="match status" value="1"/>
</dbReference>
<dbReference type="Gene3D" id="1.10.40.90">
    <property type="match status" value="1"/>
</dbReference>
<dbReference type="Gene3D" id="2.40.40.20">
    <property type="match status" value="1"/>
</dbReference>
<dbReference type="Gene3D" id="2.40.50.100">
    <property type="match status" value="3"/>
</dbReference>
<dbReference type="Gene3D" id="4.10.860.120">
    <property type="entry name" value="RNA polymerase II, clamp domain"/>
    <property type="match status" value="1"/>
</dbReference>
<dbReference type="Gene3D" id="1.10.274.100">
    <property type="entry name" value="RNA polymerase Rpb1, domain 3"/>
    <property type="match status" value="1"/>
</dbReference>
<dbReference type="HAMAP" id="MF_01322">
    <property type="entry name" value="RNApol_bact_RpoC"/>
    <property type="match status" value="1"/>
</dbReference>
<dbReference type="InterPro" id="IPR045867">
    <property type="entry name" value="DNA-dir_RpoC_beta_prime"/>
</dbReference>
<dbReference type="InterPro" id="IPR012754">
    <property type="entry name" value="DNA-dir_RpoC_beta_prime_bact"/>
</dbReference>
<dbReference type="InterPro" id="IPR000722">
    <property type="entry name" value="RNA_pol_asu"/>
</dbReference>
<dbReference type="InterPro" id="IPR006592">
    <property type="entry name" value="RNA_pol_N"/>
</dbReference>
<dbReference type="InterPro" id="IPR007080">
    <property type="entry name" value="RNA_pol_Rpb1_1"/>
</dbReference>
<dbReference type="InterPro" id="IPR007066">
    <property type="entry name" value="RNA_pol_Rpb1_3"/>
</dbReference>
<dbReference type="InterPro" id="IPR042102">
    <property type="entry name" value="RNA_pol_Rpb1_3_sf"/>
</dbReference>
<dbReference type="InterPro" id="IPR007083">
    <property type="entry name" value="RNA_pol_Rpb1_4"/>
</dbReference>
<dbReference type="InterPro" id="IPR007081">
    <property type="entry name" value="RNA_pol_Rpb1_5"/>
</dbReference>
<dbReference type="InterPro" id="IPR044893">
    <property type="entry name" value="RNA_pol_Rpb1_clamp_domain"/>
</dbReference>
<dbReference type="InterPro" id="IPR038120">
    <property type="entry name" value="Rpb1_funnel_sf"/>
</dbReference>
<dbReference type="NCBIfam" id="TIGR02386">
    <property type="entry name" value="rpoC_TIGR"/>
    <property type="match status" value="1"/>
</dbReference>
<dbReference type="PANTHER" id="PTHR19376">
    <property type="entry name" value="DNA-DIRECTED RNA POLYMERASE"/>
    <property type="match status" value="1"/>
</dbReference>
<dbReference type="PANTHER" id="PTHR19376:SF54">
    <property type="entry name" value="DNA-DIRECTED RNA POLYMERASE SUBUNIT BETA"/>
    <property type="match status" value="1"/>
</dbReference>
<dbReference type="Pfam" id="PF04997">
    <property type="entry name" value="RNA_pol_Rpb1_1"/>
    <property type="match status" value="1"/>
</dbReference>
<dbReference type="Pfam" id="PF00623">
    <property type="entry name" value="RNA_pol_Rpb1_2"/>
    <property type="match status" value="2"/>
</dbReference>
<dbReference type="Pfam" id="PF04983">
    <property type="entry name" value="RNA_pol_Rpb1_3"/>
    <property type="match status" value="1"/>
</dbReference>
<dbReference type="Pfam" id="PF05000">
    <property type="entry name" value="RNA_pol_Rpb1_4"/>
    <property type="match status" value="1"/>
</dbReference>
<dbReference type="Pfam" id="PF04998">
    <property type="entry name" value="RNA_pol_Rpb1_5"/>
    <property type="match status" value="1"/>
</dbReference>
<dbReference type="SMART" id="SM00663">
    <property type="entry name" value="RPOLA_N"/>
    <property type="match status" value="1"/>
</dbReference>
<dbReference type="SUPFAM" id="SSF64484">
    <property type="entry name" value="beta and beta-prime subunits of DNA dependent RNA-polymerase"/>
    <property type="match status" value="1"/>
</dbReference>
<comment type="function">
    <text evidence="1">DNA-dependent RNA polymerase catalyzes the transcription of DNA into RNA using the four ribonucleoside triphosphates as substrates.</text>
</comment>
<comment type="catalytic activity">
    <reaction evidence="1">
        <text>RNA(n) + a ribonucleoside 5'-triphosphate = RNA(n+1) + diphosphate</text>
        <dbReference type="Rhea" id="RHEA:21248"/>
        <dbReference type="Rhea" id="RHEA-COMP:14527"/>
        <dbReference type="Rhea" id="RHEA-COMP:17342"/>
        <dbReference type="ChEBI" id="CHEBI:33019"/>
        <dbReference type="ChEBI" id="CHEBI:61557"/>
        <dbReference type="ChEBI" id="CHEBI:140395"/>
        <dbReference type="EC" id="2.7.7.6"/>
    </reaction>
</comment>
<comment type="cofactor">
    <cofactor evidence="1">
        <name>Mg(2+)</name>
        <dbReference type="ChEBI" id="CHEBI:18420"/>
    </cofactor>
    <text evidence="1">Binds 1 Mg(2+) ion per subunit.</text>
</comment>
<comment type="cofactor">
    <cofactor evidence="1">
        <name>Zn(2+)</name>
        <dbReference type="ChEBI" id="CHEBI:29105"/>
    </cofactor>
    <text evidence="1">Binds 2 Zn(2+) ions per subunit.</text>
</comment>
<comment type="subunit">
    <text evidence="1">The RNAP catalytic core consists of 2 alpha, 1 beta, 1 beta' and 1 omega subunit. When a sigma factor is associated with the core the holoenzyme is formed, which can initiate transcription.</text>
</comment>
<comment type="similarity">
    <text evidence="1">Belongs to the RNA polymerase beta' chain family.</text>
</comment>
<gene>
    <name evidence="1" type="primary">rpoC</name>
    <name type="ordered locus">Bmul_0242</name>
    <name type="ordered locus">BMULJ_03012</name>
</gene>
<keyword id="KW-0240">DNA-directed RNA polymerase</keyword>
<keyword id="KW-0460">Magnesium</keyword>
<keyword id="KW-0479">Metal-binding</keyword>
<keyword id="KW-0548">Nucleotidyltransferase</keyword>
<keyword id="KW-1185">Reference proteome</keyword>
<keyword id="KW-0804">Transcription</keyword>
<keyword id="KW-0808">Transferase</keyword>
<keyword id="KW-0862">Zinc</keyword>
<reference key="1">
    <citation type="submission" date="2007-10" db="EMBL/GenBank/DDBJ databases">
        <title>Complete sequence of chromosome 1 of Burkholderia multivorans ATCC 17616.</title>
        <authorList>
            <person name="Copeland A."/>
            <person name="Lucas S."/>
            <person name="Lapidus A."/>
            <person name="Barry K."/>
            <person name="Glavina del Rio T."/>
            <person name="Dalin E."/>
            <person name="Tice H."/>
            <person name="Pitluck S."/>
            <person name="Chain P."/>
            <person name="Malfatti S."/>
            <person name="Shin M."/>
            <person name="Vergez L."/>
            <person name="Schmutz J."/>
            <person name="Larimer F."/>
            <person name="Land M."/>
            <person name="Hauser L."/>
            <person name="Kyrpides N."/>
            <person name="Kim E."/>
            <person name="Tiedje J."/>
            <person name="Richardson P."/>
        </authorList>
    </citation>
    <scope>NUCLEOTIDE SEQUENCE [LARGE SCALE GENOMIC DNA]</scope>
    <source>
        <strain>ATCC 17616 / 249</strain>
    </source>
</reference>
<reference key="2">
    <citation type="submission" date="2007-04" db="EMBL/GenBank/DDBJ databases">
        <title>Complete genome sequence of Burkholderia multivorans ATCC 17616.</title>
        <authorList>
            <person name="Ohtsubo Y."/>
            <person name="Yamashita A."/>
            <person name="Kurokawa K."/>
            <person name="Takami H."/>
            <person name="Yuhara S."/>
            <person name="Nishiyama E."/>
            <person name="Endo R."/>
            <person name="Miyazaki R."/>
            <person name="Ono A."/>
            <person name="Yano K."/>
            <person name="Ito M."/>
            <person name="Sota M."/>
            <person name="Yuji N."/>
            <person name="Hattori M."/>
            <person name="Tsuda M."/>
        </authorList>
    </citation>
    <scope>NUCLEOTIDE SEQUENCE [LARGE SCALE GENOMIC DNA]</scope>
    <source>
        <strain>ATCC 17616 / 249</strain>
    </source>
</reference>
<accession>A9ADI6</accession>
<proteinExistence type="inferred from homology"/>